<keyword id="KW-0963">Cytoplasm</keyword>
<keyword id="KW-0489">Methyltransferase</keyword>
<keyword id="KW-1185">Reference proteome</keyword>
<keyword id="KW-0698">rRNA processing</keyword>
<keyword id="KW-0949">S-adenosyl-L-methionine</keyword>
<keyword id="KW-0808">Transferase</keyword>
<name>RLMM_PSEPK</name>
<evidence type="ECO:0000255" key="1">
    <source>
        <dbReference type="HAMAP-Rule" id="MF_01551"/>
    </source>
</evidence>
<gene>
    <name evidence="1" type="primary">rlmM</name>
    <name type="ordered locus">PP_2113</name>
</gene>
<sequence length="354" mass="40142">MNTLFMHCRPGFEGEVCAEISEHAARLGVAGYAKGKPQSASAEFVCSEEGGAERLMGELRFNQLIFPRQWARGGYVELPERDRISVLLAQLADFPVFGSLWLEVLDSNEGKELSTFCRKFEVPLRKALEKAGRLVDDPGRPRLLLTFISGRRVFVGVASASNSALWPMGIPRLKFPREAPSRSTLKLEEAWHQFIPREQWEQRLGDDMTGVDLGASPGGWTYQLVRRGMLVTAIDNGPMAESLMDTGLVQHLMADGFTWQPKQPVDWMVCDIVEKPARTTSLIETWLGEGLCREAVVNLKLPMKQRYAEVRRLLDRMEATFKARKIRVSIACKQLYHDREEVTCHLRRLDLKPR</sequence>
<organism>
    <name type="scientific">Pseudomonas putida (strain ATCC 47054 / DSM 6125 / CFBP 8728 / NCIMB 11950 / KT2440)</name>
    <dbReference type="NCBI Taxonomy" id="160488"/>
    <lineage>
        <taxon>Bacteria</taxon>
        <taxon>Pseudomonadati</taxon>
        <taxon>Pseudomonadota</taxon>
        <taxon>Gammaproteobacteria</taxon>
        <taxon>Pseudomonadales</taxon>
        <taxon>Pseudomonadaceae</taxon>
        <taxon>Pseudomonas</taxon>
    </lineage>
</organism>
<comment type="function">
    <text evidence="1">Catalyzes the 2'-O-methylation at nucleotide C2498 in 23S rRNA.</text>
</comment>
<comment type="catalytic activity">
    <reaction evidence="1">
        <text>cytidine(2498) in 23S rRNA + S-adenosyl-L-methionine = 2'-O-methylcytidine(2498) in 23S rRNA + S-adenosyl-L-homocysteine + H(+)</text>
        <dbReference type="Rhea" id="RHEA:42788"/>
        <dbReference type="Rhea" id="RHEA-COMP:10244"/>
        <dbReference type="Rhea" id="RHEA-COMP:10245"/>
        <dbReference type="ChEBI" id="CHEBI:15378"/>
        <dbReference type="ChEBI" id="CHEBI:57856"/>
        <dbReference type="ChEBI" id="CHEBI:59789"/>
        <dbReference type="ChEBI" id="CHEBI:74495"/>
        <dbReference type="ChEBI" id="CHEBI:82748"/>
        <dbReference type="EC" id="2.1.1.186"/>
    </reaction>
</comment>
<comment type="subunit">
    <text evidence="1">Monomer.</text>
</comment>
<comment type="subcellular location">
    <subcellularLocation>
        <location evidence="1">Cytoplasm</location>
    </subcellularLocation>
</comment>
<comment type="similarity">
    <text evidence="1">Belongs to the class I-like SAM-binding methyltransferase superfamily. RNA methyltransferase RlmE family. RlmM subfamily.</text>
</comment>
<reference key="1">
    <citation type="journal article" date="2002" name="Environ. Microbiol.">
        <title>Complete genome sequence and comparative analysis of the metabolically versatile Pseudomonas putida KT2440.</title>
        <authorList>
            <person name="Nelson K.E."/>
            <person name="Weinel C."/>
            <person name="Paulsen I.T."/>
            <person name="Dodson R.J."/>
            <person name="Hilbert H."/>
            <person name="Martins dos Santos V.A.P."/>
            <person name="Fouts D.E."/>
            <person name="Gill S.R."/>
            <person name="Pop M."/>
            <person name="Holmes M."/>
            <person name="Brinkac L.M."/>
            <person name="Beanan M.J."/>
            <person name="DeBoy R.T."/>
            <person name="Daugherty S.C."/>
            <person name="Kolonay J.F."/>
            <person name="Madupu R."/>
            <person name="Nelson W.C."/>
            <person name="White O."/>
            <person name="Peterson J.D."/>
            <person name="Khouri H.M."/>
            <person name="Hance I."/>
            <person name="Chris Lee P."/>
            <person name="Holtzapple E.K."/>
            <person name="Scanlan D."/>
            <person name="Tran K."/>
            <person name="Moazzez A."/>
            <person name="Utterback T.R."/>
            <person name="Rizzo M."/>
            <person name="Lee K."/>
            <person name="Kosack D."/>
            <person name="Moestl D."/>
            <person name="Wedler H."/>
            <person name="Lauber J."/>
            <person name="Stjepandic D."/>
            <person name="Hoheisel J."/>
            <person name="Straetz M."/>
            <person name="Heim S."/>
            <person name="Kiewitz C."/>
            <person name="Eisen J.A."/>
            <person name="Timmis K.N."/>
            <person name="Duesterhoeft A."/>
            <person name="Tuemmler B."/>
            <person name="Fraser C.M."/>
        </authorList>
    </citation>
    <scope>NUCLEOTIDE SEQUENCE [LARGE SCALE GENOMIC DNA]</scope>
    <source>
        <strain>ATCC 47054 / DSM 6125 / CFBP 8728 / NCIMB 11950 / KT2440</strain>
    </source>
</reference>
<dbReference type="EC" id="2.1.1.186" evidence="1"/>
<dbReference type="EMBL" id="AE015451">
    <property type="protein sequence ID" value="AAN67726.1"/>
    <property type="molecule type" value="Genomic_DNA"/>
</dbReference>
<dbReference type="RefSeq" id="NP_744262.1">
    <property type="nucleotide sequence ID" value="NC_002947.4"/>
</dbReference>
<dbReference type="RefSeq" id="WP_010953111.1">
    <property type="nucleotide sequence ID" value="NZ_CP169744.1"/>
</dbReference>
<dbReference type="SMR" id="Q88L23"/>
<dbReference type="STRING" id="160488.PP_2113"/>
<dbReference type="PaxDb" id="160488-PP_2113"/>
<dbReference type="GeneID" id="83681366"/>
<dbReference type="KEGG" id="ppu:PP_2113"/>
<dbReference type="PATRIC" id="fig|160488.4.peg.2229"/>
<dbReference type="eggNOG" id="COG2933">
    <property type="taxonomic scope" value="Bacteria"/>
</dbReference>
<dbReference type="HOGENOM" id="CLU_043780_0_0_6"/>
<dbReference type="OrthoDB" id="154490at2"/>
<dbReference type="PhylomeDB" id="Q88L23"/>
<dbReference type="BioCyc" id="PPUT160488:G1G01-2253-MONOMER"/>
<dbReference type="Proteomes" id="UP000000556">
    <property type="component" value="Chromosome"/>
</dbReference>
<dbReference type="GO" id="GO:0005737">
    <property type="term" value="C:cytoplasm"/>
    <property type="evidence" value="ECO:0007669"/>
    <property type="project" value="UniProtKB-SubCell"/>
</dbReference>
<dbReference type="GO" id="GO:0008757">
    <property type="term" value="F:S-adenosylmethionine-dependent methyltransferase activity"/>
    <property type="evidence" value="ECO:0007669"/>
    <property type="project" value="UniProtKB-UniRule"/>
</dbReference>
<dbReference type="GO" id="GO:0032259">
    <property type="term" value="P:methylation"/>
    <property type="evidence" value="ECO:0007669"/>
    <property type="project" value="UniProtKB-KW"/>
</dbReference>
<dbReference type="GO" id="GO:0006364">
    <property type="term" value="P:rRNA processing"/>
    <property type="evidence" value="ECO:0007669"/>
    <property type="project" value="UniProtKB-UniRule"/>
</dbReference>
<dbReference type="Gene3D" id="3.30.2300.20">
    <property type="match status" value="1"/>
</dbReference>
<dbReference type="Gene3D" id="3.30.70.2810">
    <property type="match status" value="1"/>
</dbReference>
<dbReference type="Gene3D" id="3.40.50.150">
    <property type="entry name" value="Vaccinia Virus protein VP39"/>
    <property type="match status" value="1"/>
</dbReference>
<dbReference type="HAMAP" id="MF_01551">
    <property type="entry name" value="23SrRNA_methyltr_M"/>
    <property type="match status" value="1"/>
</dbReference>
<dbReference type="InterPro" id="IPR040739">
    <property type="entry name" value="RlmM_FDX"/>
</dbReference>
<dbReference type="InterPro" id="IPR048646">
    <property type="entry name" value="RlmM_THUMP-like"/>
</dbReference>
<dbReference type="InterPro" id="IPR002877">
    <property type="entry name" value="RNA_MeTrfase_FtsJ_dom"/>
</dbReference>
<dbReference type="InterPro" id="IPR011224">
    <property type="entry name" value="rRNA_MeTrfase_M"/>
</dbReference>
<dbReference type="InterPro" id="IPR029063">
    <property type="entry name" value="SAM-dependent_MTases_sf"/>
</dbReference>
<dbReference type="NCBIfam" id="NF008734">
    <property type="entry name" value="PRK11760.1"/>
    <property type="match status" value="1"/>
</dbReference>
<dbReference type="PANTHER" id="PTHR37524">
    <property type="entry name" value="RIBOSOMAL RNA LARGE SUBUNIT METHYLTRANSFERASE M"/>
    <property type="match status" value="1"/>
</dbReference>
<dbReference type="PANTHER" id="PTHR37524:SF2">
    <property type="entry name" value="RIBOSOMAL RNA METHYLTRANSFERASE FTSJ DOMAIN-CONTAINING PROTEIN"/>
    <property type="match status" value="1"/>
</dbReference>
<dbReference type="Pfam" id="PF01728">
    <property type="entry name" value="FtsJ"/>
    <property type="match status" value="1"/>
</dbReference>
<dbReference type="Pfam" id="PF18125">
    <property type="entry name" value="RlmM_FDX"/>
    <property type="match status" value="1"/>
</dbReference>
<dbReference type="Pfam" id="PF21239">
    <property type="entry name" value="RLMM_N"/>
    <property type="match status" value="1"/>
</dbReference>
<dbReference type="PIRSF" id="PIRSF028774">
    <property type="entry name" value="UCP028774"/>
    <property type="match status" value="1"/>
</dbReference>
<dbReference type="SUPFAM" id="SSF53335">
    <property type="entry name" value="S-adenosyl-L-methionine-dependent methyltransferases"/>
    <property type="match status" value="1"/>
</dbReference>
<feature type="chain" id="PRO_0000070418" description="Ribosomal RNA large subunit methyltransferase M">
    <location>
        <begin position="1"/>
        <end position="354"/>
    </location>
</feature>
<feature type="active site" description="Proton acceptor" evidence="1">
    <location>
        <position position="300"/>
    </location>
</feature>
<feature type="binding site" evidence="1">
    <location>
        <position position="183"/>
    </location>
    <ligand>
        <name>S-adenosyl-L-methionine</name>
        <dbReference type="ChEBI" id="CHEBI:59789"/>
    </ligand>
</feature>
<feature type="binding site" evidence="1">
    <location>
        <begin position="216"/>
        <end position="219"/>
    </location>
    <ligand>
        <name>S-adenosyl-L-methionine</name>
        <dbReference type="ChEBI" id="CHEBI:59789"/>
    </ligand>
</feature>
<feature type="binding site" evidence="1">
    <location>
        <position position="235"/>
    </location>
    <ligand>
        <name>S-adenosyl-L-methionine</name>
        <dbReference type="ChEBI" id="CHEBI:59789"/>
    </ligand>
</feature>
<feature type="binding site" evidence="1">
    <location>
        <position position="255"/>
    </location>
    <ligand>
        <name>S-adenosyl-L-methionine</name>
        <dbReference type="ChEBI" id="CHEBI:59789"/>
    </ligand>
</feature>
<feature type="binding site" evidence="1">
    <location>
        <position position="271"/>
    </location>
    <ligand>
        <name>S-adenosyl-L-methionine</name>
        <dbReference type="ChEBI" id="CHEBI:59789"/>
    </ligand>
</feature>
<proteinExistence type="inferred from homology"/>
<accession>Q88L23</accession>
<protein>
    <recommendedName>
        <fullName evidence="1">Ribosomal RNA large subunit methyltransferase M</fullName>
        <ecNumber evidence="1">2.1.1.186</ecNumber>
    </recommendedName>
    <alternativeName>
        <fullName evidence="1">23S rRNA (cytidine2498-2'-O)-methyltransferase</fullName>
    </alternativeName>
    <alternativeName>
        <fullName evidence="1">23S rRNA 2'-O-ribose methyltransferase RlmM</fullName>
    </alternativeName>
</protein>